<protein>
    <recommendedName>
        <fullName evidence="1">Acetate kinase</fullName>
        <ecNumber evidence="1">2.7.2.1</ecNumber>
    </recommendedName>
    <alternativeName>
        <fullName evidence="1">Acetokinase</fullName>
    </alternativeName>
</protein>
<gene>
    <name evidence="1" type="primary">ackA</name>
    <name type="ordered locus">Arth_3238</name>
</gene>
<organism>
    <name type="scientific">Arthrobacter sp. (strain FB24)</name>
    <dbReference type="NCBI Taxonomy" id="290399"/>
    <lineage>
        <taxon>Bacteria</taxon>
        <taxon>Bacillati</taxon>
        <taxon>Actinomycetota</taxon>
        <taxon>Actinomycetes</taxon>
        <taxon>Micrococcales</taxon>
        <taxon>Micrococcaceae</taxon>
        <taxon>Arthrobacter</taxon>
    </lineage>
</organism>
<evidence type="ECO:0000255" key="1">
    <source>
        <dbReference type="HAMAP-Rule" id="MF_00020"/>
    </source>
</evidence>
<comment type="function">
    <text evidence="1">Catalyzes the formation of acetyl phosphate from acetate and ATP. Can also catalyze the reverse reaction.</text>
</comment>
<comment type="catalytic activity">
    <reaction evidence="1">
        <text>acetate + ATP = acetyl phosphate + ADP</text>
        <dbReference type="Rhea" id="RHEA:11352"/>
        <dbReference type="ChEBI" id="CHEBI:22191"/>
        <dbReference type="ChEBI" id="CHEBI:30089"/>
        <dbReference type="ChEBI" id="CHEBI:30616"/>
        <dbReference type="ChEBI" id="CHEBI:456216"/>
        <dbReference type="EC" id="2.7.2.1"/>
    </reaction>
</comment>
<comment type="cofactor">
    <cofactor evidence="1">
        <name>Mg(2+)</name>
        <dbReference type="ChEBI" id="CHEBI:18420"/>
    </cofactor>
    <cofactor evidence="1">
        <name>Mn(2+)</name>
        <dbReference type="ChEBI" id="CHEBI:29035"/>
    </cofactor>
    <text evidence="1">Mg(2+). Can also accept Mn(2+).</text>
</comment>
<comment type="pathway">
    <text evidence="1">Metabolic intermediate biosynthesis; acetyl-CoA biosynthesis; acetyl-CoA from acetate: step 1/2.</text>
</comment>
<comment type="subunit">
    <text evidence="1">Homodimer.</text>
</comment>
<comment type="subcellular location">
    <subcellularLocation>
        <location evidence="1">Cytoplasm</location>
    </subcellularLocation>
</comment>
<comment type="similarity">
    <text evidence="1">Belongs to the acetokinase family.</text>
</comment>
<accession>A0JZZ4</accession>
<name>ACKA_ARTS2</name>
<reference key="1">
    <citation type="journal article" date="2013" name="Stand. Genomic Sci.">
        <title>Complete genome sequence of Arthrobacter sp. strain FB24.</title>
        <authorList>
            <person name="Nakatsu C.H."/>
            <person name="Barabote R."/>
            <person name="Thompson S."/>
            <person name="Bruce D."/>
            <person name="Detter C."/>
            <person name="Brettin T."/>
            <person name="Han C."/>
            <person name="Beasley F."/>
            <person name="Chen W."/>
            <person name="Konopka A."/>
            <person name="Xie G."/>
        </authorList>
    </citation>
    <scope>NUCLEOTIDE SEQUENCE [LARGE SCALE GENOMIC DNA]</scope>
    <source>
        <strain>FB24</strain>
    </source>
</reference>
<feature type="chain" id="PRO_1000002206" description="Acetate kinase">
    <location>
        <begin position="1"/>
        <end position="386"/>
    </location>
</feature>
<feature type="active site" description="Proton donor/acceptor" evidence="1">
    <location>
        <position position="135"/>
    </location>
</feature>
<feature type="binding site" evidence="1">
    <location>
        <position position="7"/>
    </location>
    <ligand>
        <name>Mg(2+)</name>
        <dbReference type="ChEBI" id="CHEBI:18420"/>
    </ligand>
</feature>
<feature type="binding site" evidence="1">
    <location>
        <position position="14"/>
    </location>
    <ligand>
        <name>ATP</name>
        <dbReference type="ChEBI" id="CHEBI:30616"/>
    </ligand>
</feature>
<feature type="binding site" evidence="1">
    <location>
        <position position="78"/>
    </location>
    <ligand>
        <name>substrate</name>
    </ligand>
</feature>
<feature type="binding site" evidence="1">
    <location>
        <begin position="195"/>
        <end position="199"/>
    </location>
    <ligand>
        <name>ATP</name>
        <dbReference type="ChEBI" id="CHEBI:30616"/>
    </ligand>
</feature>
<feature type="binding site" evidence="1">
    <location>
        <begin position="268"/>
        <end position="270"/>
    </location>
    <ligand>
        <name>ATP</name>
        <dbReference type="ChEBI" id="CHEBI:30616"/>
    </ligand>
</feature>
<feature type="binding site" evidence="1">
    <location>
        <begin position="316"/>
        <end position="320"/>
    </location>
    <ligand>
        <name>ATP</name>
        <dbReference type="ChEBI" id="CHEBI:30616"/>
    </ligand>
</feature>
<feature type="binding site" evidence="1">
    <location>
        <position position="370"/>
    </location>
    <ligand>
        <name>Mg(2+)</name>
        <dbReference type="ChEBI" id="CHEBI:18420"/>
    </ligand>
</feature>
<feature type="site" description="Transition state stabilizer" evidence="1">
    <location>
        <position position="167"/>
    </location>
</feature>
<feature type="site" description="Transition state stabilizer" evidence="1">
    <location>
        <position position="228"/>
    </location>
</feature>
<keyword id="KW-0067">ATP-binding</keyword>
<keyword id="KW-0963">Cytoplasm</keyword>
<keyword id="KW-0418">Kinase</keyword>
<keyword id="KW-0460">Magnesium</keyword>
<keyword id="KW-0479">Metal-binding</keyword>
<keyword id="KW-0547">Nucleotide-binding</keyword>
<keyword id="KW-1185">Reference proteome</keyword>
<keyword id="KW-0808">Transferase</keyword>
<dbReference type="EC" id="2.7.2.1" evidence="1"/>
<dbReference type="EMBL" id="CP000454">
    <property type="protein sequence ID" value="ABK04614.1"/>
    <property type="molecule type" value="Genomic_DNA"/>
</dbReference>
<dbReference type="RefSeq" id="WP_011693065.1">
    <property type="nucleotide sequence ID" value="NC_008541.1"/>
</dbReference>
<dbReference type="SMR" id="A0JZZ4"/>
<dbReference type="STRING" id="290399.Arth_3238"/>
<dbReference type="KEGG" id="art:Arth_3238"/>
<dbReference type="eggNOG" id="COG0282">
    <property type="taxonomic scope" value="Bacteria"/>
</dbReference>
<dbReference type="HOGENOM" id="CLU_020352_0_1_11"/>
<dbReference type="OrthoDB" id="9802453at2"/>
<dbReference type="UniPathway" id="UPA00340">
    <property type="reaction ID" value="UER00458"/>
</dbReference>
<dbReference type="Proteomes" id="UP000000754">
    <property type="component" value="Chromosome"/>
</dbReference>
<dbReference type="GO" id="GO:0005737">
    <property type="term" value="C:cytoplasm"/>
    <property type="evidence" value="ECO:0007669"/>
    <property type="project" value="UniProtKB-SubCell"/>
</dbReference>
<dbReference type="GO" id="GO:0008776">
    <property type="term" value="F:acetate kinase activity"/>
    <property type="evidence" value="ECO:0007669"/>
    <property type="project" value="UniProtKB-UniRule"/>
</dbReference>
<dbReference type="GO" id="GO:0005524">
    <property type="term" value="F:ATP binding"/>
    <property type="evidence" value="ECO:0007669"/>
    <property type="project" value="UniProtKB-KW"/>
</dbReference>
<dbReference type="GO" id="GO:0000287">
    <property type="term" value="F:magnesium ion binding"/>
    <property type="evidence" value="ECO:0007669"/>
    <property type="project" value="UniProtKB-UniRule"/>
</dbReference>
<dbReference type="GO" id="GO:0006083">
    <property type="term" value="P:acetate metabolic process"/>
    <property type="evidence" value="ECO:0007669"/>
    <property type="project" value="TreeGrafter"/>
</dbReference>
<dbReference type="GO" id="GO:0006085">
    <property type="term" value="P:acetyl-CoA biosynthetic process"/>
    <property type="evidence" value="ECO:0007669"/>
    <property type="project" value="UniProtKB-UniRule"/>
</dbReference>
<dbReference type="CDD" id="cd24010">
    <property type="entry name" value="ASKHA_NBD_AcK_PK"/>
    <property type="match status" value="1"/>
</dbReference>
<dbReference type="Gene3D" id="3.30.420.40">
    <property type="match status" value="2"/>
</dbReference>
<dbReference type="HAMAP" id="MF_00020">
    <property type="entry name" value="Acetate_kinase"/>
    <property type="match status" value="1"/>
</dbReference>
<dbReference type="InterPro" id="IPR004372">
    <property type="entry name" value="Ac/propionate_kinase"/>
</dbReference>
<dbReference type="InterPro" id="IPR000890">
    <property type="entry name" value="Aliphatic_acid_kin_short-chain"/>
</dbReference>
<dbReference type="InterPro" id="IPR023865">
    <property type="entry name" value="Aliphatic_acid_kinase_CS"/>
</dbReference>
<dbReference type="InterPro" id="IPR043129">
    <property type="entry name" value="ATPase_NBD"/>
</dbReference>
<dbReference type="NCBIfam" id="TIGR00016">
    <property type="entry name" value="ackA"/>
    <property type="match status" value="1"/>
</dbReference>
<dbReference type="PANTHER" id="PTHR21060">
    <property type="entry name" value="ACETATE KINASE"/>
    <property type="match status" value="1"/>
</dbReference>
<dbReference type="PANTHER" id="PTHR21060:SF15">
    <property type="entry name" value="ACETATE KINASE-RELATED"/>
    <property type="match status" value="1"/>
</dbReference>
<dbReference type="Pfam" id="PF00871">
    <property type="entry name" value="Acetate_kinase"/>
    <property type="match status" value="1"/>
</dbReference>
<dbReference type="PIRSF" id="PIRSF000722">
    <property type="entry name" value="Acetate_prop_kin"/>
    <property type="match status" value="1"/>
</dbReference>
<dbReference type="PRINTS" id="PR00471">
    <property type="entry name" value="ACETATEKNASE"/>
</dbReference>
<dbReference type="SUPFAM" id="SSF53067">
    <property type="entry name" value="Actin-like ATPase domain"/>
    <property type="match status" value="2"/>
</dbReference>
<dbReference type="PROSITE" id="PS01075">
    <property type="entry name" value="ACETATE_KINASE_1"/>
    <property type="match status" value="1"/>
</dbReference>
<sequence length="386" mass="40770">MLVLVINSGSSSLKYQVRDVASHSVLTEGLIEKIGMGNGGEGDGEIEGPRDHAEALEQVDAAIHEVLGDRTLDAVGHRVVHGGERFGEPVLIDNEITRAIERLNPLAPLHNPANVLGIRAIAKKWPDMPQVAVFDTAFHRTLPEHAWRYAVPDSLYTNHGIRRYGFHGTSHEYVSHQAAALLDLPVEEFDGVIAHLGNGASVTAIRGGKSVDTSMGFTPLEGLVMGTRSGDLDPSILVFLGRAGWSTEDIDSLLNRESGLKGLAGNNDMRSVVEASEAGDARAATALAVASYRLAKYIGGYHVAVGGAKALVFTAGIGENSHLFRALVGDKLGALGVELDAGLNSQRSKEPRVISTAASLIPVLVVPTDEERAIAEATAAVVHSAS</sequence>
<proteinExistence type="inferred from homology"/>